<protein>
    <recommendedName>
        <fullName evidence="2">Adenylosuccinate synthetase</fullName>
        <shortName evidence="2">AMPSase</shortName>
        <shortName evidence="2">AdSS</shortName>
        <ecNumber evidence="2">6.3.4.4</ecNumber>
    </recommendedName>
    <alternativeName>
        <fullName evidence="2">IMP--aspartate ligase</fullName>
    </alternativeName>
</protein>
<accession>B4PPT4</accession>
<proteinExistence type="inferred from homology"/>
<comment type="function">
    <text evidence="1">Plays an important role in the de novo pathway and in the salvage pathway of purine nucleotide biosynthesis. Catalyzes the first committed step in the biosynthesis of AMP from IMP (By similarity).</text>
</comment>
<comment type="catalytic activity">
    <reaction evidence="2">
        <text>IMP + L-aspartate + GTP = N(6)-(1,2-dicarboxyethyl)-AMP + GDP + phosphate + 2 H(+)</text>
        <dbReference type="Rhea" id="RHEA:15753"/>
        <dbReference type="ChEBI" id="CHEBI:15378"/>
        <dbReference type="ChEBI" id="CHEBI:29991"/>
        <dbReference type="ChEBI" id="CHEBI:37565"/>
        <dbReference type="ChEBI" id="CHEBI:43474"/>
        <dbReference type="ChEBI" id="CHEBI:57567"/>
        <dbReference type="ChEBI" id="CHEBI:58053"/>
        <dbReference type="ChEBI" id="CHEBI:58189"/>
        <dbReference type="EC" id="6.3.4.4"/>
    </reaction>
</comment>
<comment type="cofactor">
    <cofactor evidence="2">
        <name>Mg(2+)</name>
        <dbReference type="ChEBI" id="CHEBI:18420"/>
    </cofactor>
    <text evidence="2">Binds 1 Mg(2+) ion per subunit.</text>
</comment>
<comment type="pathway">
    <text evidence="2">Purine metabolism; AMP biosynthesis via de novo pathway; AMP from IMP: step 1/2.</text>
</comment>
<comment type="subunit">
    <text evidence="2">Homodimer.</text>
</comment>
<comment type="subcellular location">
    <subcellularLocation>
        <location evidence="2">Cytoplasm</location>
    </subcellularLocation>
</comment>
<comment type="similarity">
    <text evidence="2">Belongs to the adenylosuccinate synthetase family.</text>
</comment>
<dbReference type="EC" id="6.3.4.4" evidence="2"/>
<dbReference type="EMBL" id="CM000160">
    <property type="protein sequence ID" value="EDW96184.1"/>
    <property type="molecule type" value="Genomic_DNA"/>
</dbReference>
<dbReference type="SMR" id="B4PPT4"/>
<dbReference type="GeneID" id="6535853"/>
<dbReference type="KEGG" id="dya:Dyak_GE25034"/>
<dbReference type="eggNOG" id="KOG1355">
    <property type="taxonomic scope" value="Eukaryota"/>
</dbReference>
<dbReference type="HOGENOM" id="CLU_029848_3_0_1"/>
<dbReference type="OMA" id="QSYVRFL"/>
<dbReference type="OrthoDB" id="10265645at2759"/>
<dbReference type="PhylomeDB" id="B4PPT4"/>
<dbReference type="UniPathway" id="UPA00075">
    <property type="reaction ID" value="UER00335"/>
</dbReference>
<dbReference type="Proteomes" id="UP000002282">
    <property type="component" value="Chromosome 3R"/>
</dbReference>
<dbReference type="GO" id="GO:0005737">
    <property type="term" value="C:cytoplasm"/>
    <property type="evidence" value="ECO:0007669"/>
    <property type="project" value="UniProtKB-SubCell"/>
</dbReference>
<dbReference type="GO" id="GO:0004019">
    <property type="term" value="F:adenylosuccinate synthase activity"/>
    <property type="evidence" value="ECO:0007669"/>
    <property type="project" value="UniProtKB-UniRule"/>
</dbReference>
<dbReference type="GO" id="GO:0005525">
    <property type="term" value="F:GTP binding"/>
    <property type="evidence" value="ECO:0007669"/>
    <property type="project" value="UniProtKB-UniRule"/>
</dbReference>
<dbReference type="GO" id="GO:0000287">
    <property type="term" value="F:magnesium ion binding"/>
    <property type="evidence" value="ECO:0007669"/>
    <property type="project" value="UniProtKB-UniRule"/>
</dbReference>
<dbReference type="GO" id="GO:0044208">
    <property type="term" value="P:'de novo' AMP biosynthetic process"/>
    <property type="evidence" value="ECO:0007669"/>
    <property type="project" value="UniProtKB-UniRule"/>
</dbReference>
<dbReference type="GO" id="GO:0046040">
    <property type="term" value="P:IMP metabolic process"/>
    <property type="evidence" value="ECO:0007669"/>
    <property type="project" value="TreeGrafter"/>
</dbReference>
<dbReference type="CDD" id="cd03108">
    <property type="entry name" value="AdSS"/>
    <property type="match status" value="1"/>
</dbReference>
<dbReference type="FunFam" id="3.90.170.10:FF:000001">
    <property type="entry name" value="Adenylosuccinate synthetase"/>
    <property type="match status" value="1"/>
</dbReference>
<dbReference type="Gene3D" id="3.40.440.10">
    <property type="entry name" value="Adenylosuccinate Synthetase, subunit A, domain 1"/>
    <property type="match status" value="3"/>
</dbReference>
<dbReference type="Gene3D" id="3.90.170.10">
    <property type="entry name" value="Adenylosuccinate Synthetase, subunit A, domain 3"/>
    <property type="match status" value="1"/>
</dbReference>
<dbReference type="HAMAP" id="MF_00011">
    <property type="entry name" value="Adenylosucc_synth"/>
    <property type="match status" value="1"/>
</dbReference>
<dbReference type="InterPro" id="IPR018220">
    <property type="entry name" value="Adenylosuccin_syn_GTP-bd"/>
</dbReference>
<dbReference type="InterPro" id="IPR033128">
    <property type="entry name" value="Adenylosuccin_syn_Lys_AS"/>
</dbReference>
<dbReference type="InterPro" id="IPR042109">
    <property type="entry name" value="Adenylosuccinate_synth_dom1"/>
</dbReference>
<dbReference type="InterPro" id="IPR042111">
    <property type="entry name" value="Adenylosuccinate_synth_dom3"/>
</dbReference>
<dbReference type="InterPro" id="IPR001114">
    <property type="entry name" value="Adenylosuccinate_synthetase"/>
</dbReference>
<dbReference type="InterPro" id="IPR027417">
    <property type="entry name" value="P-loop_NTPase"/>
</dbReference>
<dbReference type="NCBIfam" id="TIGR00184">
    <property type="entry name" value="purA"/>
    <property type="match status" value="1"/>
</dbReference>
<dbReference type="PANTHER" id="PTHR11846">
    <property type="entry name" value="ADENYLOSUCCINATE SYNTHETASE"/>
    <property type="match status" value="1"/>
</dbReference>
<dbReference type="PANTHER" id="PTHR11846:SF0">
    <property type="entry name" value="ADENYLOSUCCINATE SYNTHETASE"/>
    <property type="match status" value="1"/>
</dbReference>
<dbReference type="Pfam" id="PF00709">
    <property type="entry name" value="Adenylsucc_synt"/>
    <property type="match status" value="1"/>
</dbReference>
<dbReference type="SMART" id="SM00788">
    <property type="entry name" value="Adenylsucc_synt"/>
    <property type="match status" value="1"/>
</dbReference>
<dbReference type="SUPFAM" id="SSF52540">
    <property type="entry name" value="P-loop containing nucleoside triphosphate hydrolases"/>
    <property type="match status" value="2"/>
</dbReference>
<dbReference type="PROSITE" id="PS01266">
    <property type="entry name" value="ADENYLOSUCCIN_SYN_1"/>
    <property type="match status" value="1"/>
</dbReference>
<dbReference type="PROSITE" id="PS00513">
    <property type="entry name" value="ADENYLOSUCCIN_SYN_2"/>
    <property type="match status" value="1"/>
</dbReference>
<gene>
    <name type="ORF">GE25034</name>
</gene>
<sequence length="506" mass="55494">MSTSATNGTHYEQLHQGRTKMYKSKVDVVLGAQWGDEGKGKVVDMLASDVDIVCRCQGGNNAGHTVVANGTEFDFHLLPSGVVNEKCVSVIGNGVVIHLPSLFDEVLKNEAKGLQHLENRLIISDRAHLVFDFHQHVDGMQEAEKGGKSLGNGVVIHLPSLFDEVLKNEAKGLQHLENRLIISDRAHLVFDFHQHVDGMQEAEKGGKSLGTTKKGIGPAYSSKATRNGIRVGELLGDFNLFSEKFKSIVATHVRLFPSINVDVEAELARYKDYADKVRPYVKDTICFLHTALRNGKTILVEGANAAMLDIDFGTYPYVTSSNCSIGGVLTGLGLPPQTIGEVIGVVKAYTTRVGDGPFPTEQLNDIGDLLQTRGFEIGVTTKRKRRCGWLDIPLLKYTSLVNGYTCICVTKLDILDTLPEIKVAVAYKKPNGEKLDHFPGTIAELGSIEVEYAVLPGWQTSTEDVRNFKELPENAQSYVRFLESELSVPVRWVGVGKGRESIINVH</sequence>
<keyword id="KW-0963">Cytoplasm</keyword>
<keyword id="KW-0342">GTP-binding</keyword>
<keyword id="KW-0436">Ligase</keyword>
<keyword id="KW-0460">Magnesium</keyword>
<keyword id="KW-0479">Metal-binding</keyword>
<keyword id="KW-0547">Nucleotide-binding</keyword>
<keyword id="KW-0658">Purine biosynthesis</keyword>
<organism>
    <name type="scientific">Drosophila yakuba</name>
    <name type="common">Fruit fly</name>
    <dbReference type="NCBI Taxonomy" id="7245"/>
    <lineage>
        <taxon>Eukaryota</taxon>
        <taxon>Metazoa</taxon>
        <taxon>Ecdysozoa</taxon>
        <taxon>Arthropoda</taxon>
        <taxon>Hexapoda</taxon>
        <taxon>Insecta</taxon>
        <taxon>Pterygota</taxon>
        <taxon>Neoptera</taxon>
        <taxon>Endopterygota</taxon>
        <taxon>Diptera</taxon>
        <taxon>Brachycera</taxon>
        <taxon>Muscomorpha</taxon>
        <taxon>Ephydroidea</taxon>
        <taxon>Drosophilidae</taxon>
        <taxon>Drosophila</taxon>
        <taxon>Sophophora</taxon>
    </lineage>
</organism>
<evidence type="ECO:0000250" key="1"/>
<evidence type="ECO:0000255" key="2">
    <source>
        <dbReference type="HAMAP-Rule" id="MF_03125"/>
    </source>
</evidence>
<feature type="chain" id="PRO_0000399267" description="Adenylosuccinate synthetase">
    <location>
        <begin position="1"/>
        <end position="506"/>
    </location>
</feature>
<feature type="active site" description="Proton acceptor" evidence="2">
    <location>
        <position position="36"/>
    </location>
</feature>
<feature type="active site" description="Proton donor" evidence="2">
    <location>
        <position position="64"/>
    </location>
</feature>
<feature type="binding site" evidence="2">
    <location>
        <begin position="35"/>
        <end position="41"/>
    </location>
    <ligand>
        <name>GTP</name>
        <dbReference type="ChEBI" id="CHEBI:37565"/>
    </ligand>
</feature>
<feature type="binding site" description="in other chain" evidence="2">
    <location>
        <begin position="36"/>
        <end position="39"/>
    </location>
    <ligand>
        <name>IMP</name>
        <dbReference type="ChEBI" id="CHEBI:58053"/>
        <note>ligand shared between dimeric partners</note>
    </ligand>
</feature>
<feature type="binding site" evidence="2">
    <location>
        <position position="36"/>
    </location>
    <ligand>
        <name>Mg(2+)</name>
        <dbReference type="ChEBI" id="CHEBI:18420"/>
    </ligand>
</feature>
<feature type="binding site" description="in other chain" evidence="2">
    <location>
        <begin position="61"/>
        <end position="64"/>
    </location>
    <ligand>
        <name>IMP</name>
        <dbReference type="ChEBI" id="CHEBI:58053"/>
        <note>ligand shared between dimeric partners</note>
    </ligand>
</feature>
<feature type="binding site" evidence="2">
    <location>
        <begin position="63"/>
        <end position="65"/>
    </location>
    <ligand>
        <name>GTP</name>
        <dbReference type="ChEBI" id="CHEBI:37565"/>
    </ligand>
</feature>
<feature type="binding site" evidence="2">
    <location>
        <position position="63"/>
    </location>
    <ligand>
        <name>Mg(2+)</name>
        <dbReference type="ChEBI" id="CHEBI:18420"/>
    </ligand>
</feature>
<feature type="binding site" description="in other chain" evidence="2">
    <location>
        <position position="212"/>
    </location>
    <ligand>
        <name>IMP</name>
        <dbReference type="ChEBI" id="CHEBI:58053"/>
        <note>ligand shared between dimeric partners</note>
    </ligand>
</feature>
<feature type="binding site" evidence="2">
    <location>
        <position position="226"/>
    </location>
    <ligand>
        <name>IMP</name>
        <dbReference type="ChEBI" id="CHEBI:58053"/>
        <note>ligand shared between dimeric partners</note>
    </ligand>
</feature>
<feature type="binding site" description="in other chain" evidence="2">
    <location>
        <position position="304"/>
    </location>
    <ligand>
        <name>IMP</name>
        <dbReference type="ChEBI" id="CHEBI:58053"/>
        <note>ligand shared between dimeric partners</note>
    </ligand>
</feature>
<feature type="binding site" description="in other chain" evidence="2">
    <location>
        <position position="319"/>
    </location>
    <ligand>
        <name>IMP</name>
        <dbReference type="ChEBI" id="CHEBI:58053"/>
        <note>ligand shared between dimeric partners</note>
    </ligand>
</feature>
<feature type="binding site" evidence="2">
    <location>
        <begin position="379"/>
        <end position="385"/>
    </location>
    <ligand>
        <name>substrate</name>
    </ligand>
</feature>
<feature type="binding site" description="in other chain" evidence="2">
    <location>
        <position position="383"/>
    </location>
    <ligand>
        <name>IMP</name>
        <dbReference type="ChEBI" id="CHEBI:58053"/>
        <note>ligand shared between dimeric partners</note>
    </ligand>
</feature>
<feature type="binding site" evidence="2">
    <location>
        <position position="385"/>
    </location>
    <ligand>
        <name>GTP</name>
        <dbReference type="ChEBI" id="CHEBI:37565"/>
    </ligand>
</feature>
<feature type="binding site" evidence="2">
    <location>
        <begin position="411"/>
        <end position="413"/>
    </location>
    <ligand>
        <name>GTP</name>
        <dbReference type="ChEBI" id="CHEBI:37565"/>
    </ligand>
</feature>
<feature type="binding site" evidence="2">
    <location>
        <begin position="494"/>
        <end position="496"/>
    </location>
    <ligand>
        <name>GTP</name>
        <dbReference type="ChEBI" id="CHEBI:37565"/>
    </ligand>
</feature>
<name>PURA_DROYA</name>
<reference key="1">
    <citation type="journal article" date="2007" name="Nature">
        <title>Evolution of genes and genomes on the Drosophila phylogeny.</title>
        <authorList>
            <consortium name="Drosophila 12 genomes consortium"/>
        </authorList>
    </citation>
    <scope>NUCLEOTIDE SEQUENCE [LARGE SCALE GENOMIC DNA]</scope>
    <source>
        <strain>Tai18E2 / Tucson 14021-0261.01</strain>
    </source>
</reference>